<proteinExistence type="evidence at protein level"/>
<accession>P78953</accession>
<organism>
    <name type="scientific">Schizosaccharomyces pombe (strain 972 / ATCC 24843)</name>
    <name type="common">Fission yeast</name>
    <dbReference type="NCBI Taxonomy" id="284812"/>
    <lineage>
        <taxon>Eukaryota</taxon>
        <taxon>Fungi</taxon>
        <taxon>Dikarya</taxon>
        <taxon>Ascomycota</taxon>
        <taxon>Taphrinomycotina</taxon>
        <taxon>Schizosaccharomycetes</taxon>
        <taxon>Schizosaccharomycetales</taxon>
        <taxon>Schizosaccharomycetaceae</taxon>
        <taxon>Schizosaccharomyces</taxon>
    </lineage>
</organism>
<reference key="1">
    <citation type="journal article" date="1996" name="Genes Dev.">
        <title>The dmf1/mid1 gene is essential for correct positioning of the division septum in fission yeast.</title>
        <authorList>
            <person name="Sohrmann M."/>
            <person name="Fankhauser C."/>
            <person name="Brodbeck C."/>
            <person name="Simanis V."/>
        </authorList>
    </citation>
    <scope>NUCLEOTIDE SEQUENCE [MRNA]</scope>
    <scope>FUNCTION</scope>
    <scope>SUBCELLULAR LOCATION</scope>
    <scope>PHOSPHORYLATION</scope>
    <source>
        <strain>972 / ATCC 24843</strain>
    </source>
</reference>
<reference key="2">
    <citation type="journal article" date="2002" name="Nature">
        <title>The genome sequence of Schizosaccharomyces pombe.</title>
        <authorList>
            <person name="Wood V."/>
            <person name="Gwilliam R."/>
            <person name="Rajandream M.A."/>
            <person name="Lyne M.H."/>
            <person name="Lyne R."/>
            <person name="Stewart A."/>
            <person name="Sgouros J.G."/>
            <person name="Peat N."/>
            <person name="Hayles J."/>
            <person name="Baker S.G."/>
            <person name="Basham D."/>
            <person name="Bowman S."/>
            <person name="Brooks K."/>
            <person name="Brown D."/>
            <person name="Brown S."/>
            <person name="Chillingworth T."/>
            <person name="Churcher C.M."/>
            <person name="Collins M."/>
            <person name="Connor R."/>
            <person name="Cronin A."/>
            <person name="Davis P."/>
            <person name="Feltwell T."/>
            <person name="Fraser A."/>
            <person name="Gentles S."/>
            <person name="Goble A."/>
            <person name="Hamlin N."/>
            <person name="Harris D.E."/>
            <person name="Hidalgo J."/>
            <person name="Hodgson G."/>
            <person name="Holroyd S."/>
            <person name="Hornsby T."/>
            <person name="Howarth S."/>
            <person name="Huckle E.J."/>
            <person name="Hunt S."/>
            <person name="Jagels K."/>
            <person name="James K.D."/>
            <person name="Jones L."/>
            <person name="Jones M."/>
            <person name="Leather S."/>
            <person name="McDonald S."/>
            <person name="McLean J."/>
            <person name="Mooney P."/>
            <person name="Moule S."/>
            <person name="Mungall K.L."/>
            <person name="Murphy L.D."/>
            <person name="Niblett D."/>
            <person name="Odell C."/>
            <person name="Oliver K."/>
            <person name="O'Neil S."/>
            <person name="Pearson D."/>
            <person name="Quail M.A."/>
            <person name="Rabbinowitsch E."/>
            <person name="Rutherford K.M."/>
            <person name="Rutter S."/>
            <person name="Saunders D."/>
            <person name="Seeger K."/>
            <person name="Sharp S."/>
            <person name="Skelton J."/>
            <person name="Simmonds M.N."/>
            <person name="Squares R."/>
            <person name="Squares S."/>
            <person name="Stevens K."/>
            <person name="Taylor K."/>
            <person name="Taylor R.G."/>
            <person name="Tivey A."/>
            <person name="Walsh S.V."/>
            <person name="Warren T."/>
            <person name="Whitehead S."/>
            <person name="Woodward J.R."/>
            <person name="Volckaert G."/>
            <person name="Aert R."/>
            <person name="Robben J."/>
            <person name="Grymonprez B."/>
            <person name="Weltjens I."/>
            <person name="Vanstreels E."/>
            <person name="Rieger M."/>
            <person name="Schaefer M."/>
            <person name="Mueller-Auer S."/>
            <person name="Gabel C."/>
            <person name="Fuchs M."/>
            <person name="Duesterhoeft A."/>
            <person name="Fritzc C."/>
            <person name="Holzer E."/>
            <person name="Moestl D."/>
            <person name="Hilbert H."/>
            <person name="Borzym K."/>
            <person name="Langer I."/>
            <person name="Beck A."/>
            <person name="Lehrach H."/>
            <person name="Reinhardt R."/>
            <person name="Pohl T.M."/>
            <person name="Eger P."/>
            <person name="Zimmermann W."/>
            <person name="Wedler H."/>
            <person name="Wambutt R."/>
            <person name="Purnelle B."/>
            <person name="Goffeau A."/>
            <person name="Cadieu E."/>
            <person name="Dreano S."/>
            <person name="Gloux S."/>
            <person name="Lelaure V."/>
            <person name="Mottier S."/>
            <person name="Galibert F."/>
            <person name="Aves S.J."/>
            <person name="Xiang Z."/>
            <person name="Hunt C."/>
            <person name="Moore K."/>
            <person name="Hurst S.M."/>
            <person name="Lucas M."/>
            <person name="Rochet M."/>
            <person name="Gaillardin C."/>
            <person name="Tallada V.A."/>
            <person name="Garzon A."/>
            <person name="Thode G."/>
            <person name="Daga R.R."/>
            <person name="Cruzado L."/>
            <person name="Jimenez J."/>
            <person name="Sanchez M."/>
            <person name="del Rey F."/>
            <person name="Benito J."/>
            <person name="Dominguez A."/>
            <person name="Revuelta J.L."/>
            <person name="Moreno S."/>
            <person name="Armstrong J."/>
            <person name="Forsburg S.L."/>
            <person name="Cerutti L."/>
            <person name="Lowe T."/>
            <person name="McCombie W.R."/>
            <person name="Paulsen I."/>
            <person name="Potashkin J."/>
            <person name="Shpakovski G.V."/>
            <person name="Ussery D."/>
            <person name="Barrell B.G."/>
            <person name="Nurse P."/>
        </authorList>
    </citation>
    <scope>NUCLEOTIDE SEQUENCE [LARGE SCALE GENOMIC DNA]</scope>
    <source>
        <strain>972 / ATCC 24843</strain>
    </source>
</reference>
<reference key="3">
    <citation type="journal article" date="1998" name="J. Cell Biol.">
        <title>Role of polo kinase and Mid1p in determining the site of cell division in fission yeast.</title>
        <authorList>
            <person name="Baehler J."/>
            <person name="Steever A.B."/>
            <person name="Wheatley S."/>
            <person name="Wang Y.L."/>
            <person name="Pringle J.R."/>
            <person name="Gould K.L."/>
            <person name="McCollum D."/>
        </authorList>
    </citation>
    <scope>FUNCTION</scope>
    <scope>SUBCELLULAR LOCATION</scope>
</reference>
<reference key="4">
    <citation type="journal article" date="2000" name="Mol. Biol. Cell">
        <title>Analysis of mid1p, a protein required for placement of the cell division site, reveals a link between the nucleus and the cell surface in fission yeast.</title>
        <authorList>
            <person name="Paoletti A."/>
            <person name="Chang F."/>
        </authorList>
    </citation>
    <scope>FUNCTION</scope>
    <scope>DOMAIN</scope>
    <scope>SUBCELLULAR LOCATION</scope>
</reference>
<reference key="5">
    <citation type="journal article" date="2002" name="J. Cell Sci.">
        <title>Cytokinetic actomyosin ring formation and septation in fission yeast are dependent on the full recruitment of the polo-like kinase Plo1 to the spindle pole body and a functional spindle assembly checkpoint.</title>
        <authorList>
            <person name="Mulvihill D.P."/>
            <person name="Hyams J.S."/>
        </authorList>
    </citation>
    <scope>FUNCTION</scope>
    <scope>SUBCELLULAR LOCATION</scope>
</reference>
<reference key="6">
    <citation type="journal article" date="2004" name="EMBO J.">
        <title>Mechanism controlling perpendicular alignment of the spindle to the axis of cell division in fission yeast.</title>
        <authorList>
            <person name="Gachet Y."/>
            <person name="Tournier S."/>
            <person name="Millar J.B."/>
            <person name="Hyams J.S."/>
        </authorList>
    </citation>
    <scope>FUNCTION</scope>
</reference>
<reference key="7">
    <citation type="journal article" date="2004" name="J. Cell Biol.">
        <title>Myosin-II reorganization during mitosis is controlled temporally by its dephosphorylation and spatially by Mid1 in fission yeast.</title>
        <authorList>
            <person name="Motegi F."/>
            <person name="Mishra M."/>
            <person name="Balasubramanian M.K."/>
            <person name="Mabuchi I."/>
        </authorList>
    </citation>
    <scope>FUNCTION</scope>
</reference>
<reference key="8">
    <citation type="journal article" date="2004" name="Mol. Cell. Biol.">
        <title>C-terminal anchoring of mid1p to membranes stabilizes cytokinetic ring position in early mitosis in fission yeast.</title>
        <authorList>
            <person name="Celton-Morizur S."/>
            <person name="Bordes N."/>
            <person name="Fraisier V."/>
            <person name="Tran P.T."/>
            <person name="Paoletti A."/>
        </authorList>
    </citation>
    <scope>FUNCTION</scope>
    <scope>DOMAIN</scope>
    <scope>SUBCELLULAR LOCATION</scope>
    <scope>SUBUNIT</scope>
</reference>
<reference key="9">
    <citation type="journal article" date="2006" name="Curr. Biol.">
        <title>The cell-end factor pom1p inhibits mid1p in specification of the cell division plane in fission yeast.</title>
        <authorList>
            <person name="Padte N.N."/>
            <person name="Martin S.G."/>
            <person name="Howard M."/>
            <person name="Chang F."/>
        </authorList>
    </citation>
    <scope>FUNCTION</scope>
    <scope>SUBCELLULAR LOCATION</scope>
</reference>
<reference key="10">
    <citation type="journal article" date="2006" name="J. Cell Biol.">
        <title>Assembly of the cytokinetic contractile ring from a broad band of nodes in fission yeast.</title>
        <authorList>
            <person name="Wu J.Q."/>
            <person name="Sirotkin V."/>
            <person name="Kovar D.R."/>
            <person name="Lord M."/>
            <person name="Beltzner C.C."/>
            <person name="Kuhn J.R."/>
            <person name="Pollard T.D."/>
        </authorList>
    </citation>
    <scope>FUNCTION</scope>
    <scope>SUBCELLULAR LOCATION</scope>
</reference>
<reference key="11">
    <citation type="journal article" date="2006" name="J. Cell Sci.">
        <title>Pom1 kinase links division plane position to cell polarity by regulating Mid1p cortical distribution.</title>
        <authorList>
            <person name="Celton-Morizur S."/>
            <person name="Racine V."/>
            <person name="Sibarita J.B."/>
            <person name="Paoletti A."/>
        </authorList>
    </citation>
    <scope>FUNCTION</scope>
    <scope>SUBCELLULAR LOCATION</scope>
</reference>
<reference key="12">
    <citation type="journal article" date="2008" name="J. Cell Biol.">
        <title>The Clp1/Cdc14 phosphatase contributes to the robustness of cytokinesis by association with anillin-related Mid1.</title>
        <authorList>
            <person name="Clifford D.M."/>
            <person name="Wolfe B.A."/>
            <person name="Roberts-Galbraith R.H."/>
            <person name="McDonald W.H."/>
            <person name="Yates J.R. III"/>
            <person name="Gould K.L."/>
        </authorList>
    </citation>
    <scope>FUNCTION</scope>
    <scope>INTERACTION WITH CLP1</scope>
</reference>
<reference key="13">
    <citation type="journal article" date="2008" name="J. Proteome Res.">
        <title>Phosphoproteome analysis of fission yeast.</title>
        <authorList>
            <person name="Wilson-Grady J.T."/>
            <person name="Villen J."/>
            <person name="Gygi S.P."/>
        </authorList>
    </citation>
    <scope>PHOSPHORYLATION [LARGE SCALE ANALYSIS] AT SER-531</scope>
    <scope>IDENTIFICATION BY MASS SPECTROMETRY</scope>
</reference>
<reference key="14">
    <citation type="journal article" date="2009" name="Curr. Biol.">
        <title>Spatial control of cytokinesis by Cdr2 kinase and Mid1/anillin nuclear export.</title>
        <authorList>
            <person name="Almonacid M."/>
            <person name="Moseley J.B."/>
            <person name="Janvore J."/>
            <person name="Mayeux A."/>
            <person name="Fraisier V."/>
            <person name="Nurse P."/>
            <person name="Paoletti A."/>
        </authorList>
    </citation>
    <scope>FUNCTION</scope>
    <scope>SUBCELLULAR LOCATION</scope>
</reference>
<reference key="15">
    <citation type="journal article" date="2009" name="Nature">
        <title>A spatial gradient coordinates cell size and mitotic entry in fission yeast.</title>
        <authorList>
            <person name="Moseley J.B."/>
            <person name="Mayeux A."/>
            <person name="Paoletti A."/>
            <person name="Nurse P."/>
        </authorList>
    </citation>
    <scope>SUBCELLULAR LOCATION</scope>
    <scope>FUNCTION</scope>
    <scope>INTERACTION WITH BLT1 AND CDR2</scope>
</reference>
<reference key="16">
    <citation type="journal article" date="2010" name="Curr. Biol.">
        <title>The cortical ER network limits the permissive zone for actomyosin ring assembly.</title>
        <authorList>
            <person name="Zhang D."/>
            <person name="Vjestica A."/>
            <person name="Oliferenko S."/>
        </authorList>
    </citation>
    <scope>SUBCELLULAR LOCATION</scope>
</reference>
<reference key="17">
    <citation type="journal article" date="2010" name="J. Cell Sci.">
        <title>Mid1p-dependent regulation of the M-G1 transcription wave in fission yeast.</title>
        <authorList>
            <person name="Agarwal M."/>
            <person name="Papadopoulou K."/>
            <person name="Mayeux A."/>
            <person name="Vajrala V."/>
            <person name="Quintana D.M."/>
            <person name="Paoletti A."/>
            <person name="McInerny C.J."/>
        </authorList>
    </citation>
    <scope>FUNCTION</scope>
    <scope>INTERACTION WITH FKH2 AND SEP1</scope>
</reference>
<reference key="18">
    <citation type="journal article" date="2011" name="Curr. Biol.">
        <title>IQGAP-related Rng2p organizes cortical nodes and ensures position of cell division in fission yeast.</title>
        <authorList>
            <person name="Padmanabhan A."/>
            <person name="Bakka K."/>
            <person name="Sevugan M."/>
            <person name="Naqvi N.I."/>
            <person name="D'souza V."/>
            <person name="Tang X."/>
            <person name="Mishra M."/>
            <person name="Balasubramanian M.K."/>
        </authorList>
    </citation>
    <scope>FUNCTION</scope>
</reference>
<reference key="19">
    <citation type="journal article" date="2011" name="Curr. Biol.">
        <title>Temporal control of contractile ring assembly by Plo1 regulation of myosin II recruitment by Mid1/anillin.</title>
        <authorList>
            <person name="Almonacid M."/>
            <person name="Celton-Morizur S."/>
            <person name="Jakubowski J.L."/>
            <person name="Dingli F."/>
            <person name="Loew D."/>
            <person name="Mayeux A."/>
            <person name="Chen J.S."/>
            <person name="Gould K.L."/>
            <person name="Clifford D.M."/>
            <person name="Paoletti A."/>
        </authorList>
    </citation>
    <scope>FUNCTION</scope>
    <scope>PHOSPHORYLATION AT SER-15; SER-24; THR-34; SER-46; SER-62 AND SER-95</scope>
    <scope>INTERACTION WITH PLO1 AND RNG2</scope>
</reference>
<reference key="20">
    <citation type="journal article" date="2012" name="Cytoskeleton">
        <title>Mid1/anillin and the spatial regulation of cytokinesis in fission yeast.</title>
        <authorList>
            <person name="Rincon S.A."/>
            <person name="Paoletti A."/>
        </authorList>
    </citation>
    <scope>REVIEW ON FUNCTION</scope>
</reference>
<reference key="21">
    <citation type="journal article" date="2012" name="J. Cell Sci.">
        <title>Characterization of Mid1 domains for targeting and scaffolding in fission yeast cytokinesis.</title>
        <authorList>
            <person name="Lee I.J."/>
            <person name="Wu J.Q."/>
        </authorList>
    </citation>
    <scope>FUNCTION</scope>
    <scope>DOMAIN</scope>
    <scope>SUBCELLULAR LOCATION</scope>
</reference>
<reference key="22">
    <citation type="journal article" date="2012" name="Mol. Biol. Cell">
        <title>Roles of putative Rho-GEF Gef2 in division-site positioning and contractile-ring function in fission yeast cytokinesis.</title>
        <authorList>
            <person name="Ye Y."/>
            <person name="Lee I.J."/>
            <person name="Runge K.W."/>
            <person name="Wu J.Q."/>
        </authorList>
    </citation>
    <scope>FUNCTION</scope>
    <scope>SUBCELLULAR LOCATION</scope>
    <scope>INTERACTION WITH GEF2</scope>
</reference>
<reference key="23">
    <citation type="journal article" date="2012" name="Mol. Biol. Cell">
        <title>Anillin-related protein Mid1p coordinates the assembly of the cytokinetic contractile ring in fission yeast.</title>
        <authorList>
            <person name="Saha S."/>
            <person name="Pollard T.D."/>
        </authorList>
    </citation>
    <scope>FUNCTION</scope>
</reference>
<reference key="24">
    <citation type="journal article" date="2012" name="Mol. Biol. Cell">
        <title>Characterization of structural and functional domains of the anillin-related protein Mid1p that contribute to cytokinesis in fission yeast.</title>
        <authorList>
            <person name="Saha S."/>
            <person name="Pollard T.D."/>
        </authorList>
    </citation>
    <scope>FUNCTION</scope>
    <scope>DOMAIN</scope>
    <scope>SUBCELLULAR LOCATION</scope>
</reference>
<reference key="25">
    <citation type="journal article" date="2013" name="Mol. Cell. Biol.">
        <title>Blt1 and Mid1 provide overlapping membrane anchors to position the division plane in fission yeast.</title>
        <authorList>
            <person name="Guzman-Vendrell M."/>
            <person name="Baldissard S."/>
            <person name="Almonacid M."/>
            <person name="Mayeux A."/>
            <person name="Paoletti A."/>
            <person name="Moseley J.B."/>
        </authorList>
    </citation>
    <scope>FUNCTION</scope>
    <scope>INTERACTION WITH BLT1</scope>
</reference>
<reference key="26">
    <citation type="journal article" date="2014" name="J. Cell Biol.">
        <title>Pom1 regulates the assembly of Cdr2-Mid1 cortical nodes for robust spatial control of cytokinesis.</title>
        <authorList>
            <person name="Rincon S.A."/>
            <person name="Bhatia P."/>
            <person name="Bicho C."/>
            <person name="Guzman-Vendrell M."/>
            <person name="Fraisier V."/>
            <person name="Borek W.E."/>
            <person name="Alves F.L."/>
            <person name="Dingli F."/>
            <person name="Loew D."/>
            <person name="Rappsilber J."/>
            <person name="Sawin K.E."/>
            <person name="Martin S.G."/>
            <person name="Paoletti A."/>
        </authorList>
    </citation>
    <scope>FUNCTION</scope>
    <scope>SUBCELLULAR LOCATION</scope>
    <scope>INTERACTION WITH CDR2</scope>
</reference>
<reference key="27">
    <citation type="journal article" date="2015" name="J. Cell Sci.">
        <title>The septation initiation network controls the assembly of nodes containing Cdr2p for cytokinesis in fission yeast.</title>
        <authorList>
            <person name="Pu K.M."/>
            <person name="Akamatsu M."/>
            <person name="Pollard T.D."/>
        </authorList>
    </citation>
    <scope>SUBCELLULAR LOCATION</scope>
</reference>
<reference key="28">
    <citation type="journal article" date="2017" name="Org. Lett.">
        <title>Identification and heterologous production of a benzoyl-primed tricarboxylic acid polyketide intermediate from the zaragozic acid A biosynthetic pathway.</title>
        <authorList>
            <person name="Liu N."/>
            <person name="Hung Y.S."/>
            <person name="Gao S.S."/>
            <person name="Hang L."/>
            <person name="Zou Y."/>
            <person name="Chooi Y.H."/>
            <person name="Tang Y."/>
        </authorList>
    </citation>
    <scope>FUNCTION</scope>
    <scope>PHOSPHORYLATION BY SID2</scope>
</reference>
<reference key="29">
    <citation type="journal article" date="2019" name="Biochemistry">
        <title>The functionally important N-terminal half of fission yeast Mid1p anillin is intrinsically disordered and undergoes phase separation.</title>
        <authorList>
            <person name="Chatterjee M."/>
            <person name="Pollard T.D."/>
        </authorList>
    </citation>
    <scope>FUNCTION</scope>
    <scope>DOMAIN</scope>
    <scope>PHOSPHORYLATION</scope>
</reference>
<reference evidence="34" key="30">
    <citation type="journal article" date="2015" name="Dev. Cell">
        <title>Mechanistic insights into the anchorage of the contractile ring by anillin and Mid1.</title>
        <authorList>
            <person name="Sun L."/>
            <person name="Guan R."/>
            <person name="Lee I.J."/>
            <person name="Liu Y."/>
            <person name="Chen M."/>
            <person name="Wang J."/>
            <person name="Wu J.Q."/>
            <person name="Chen Z."/>
        </authorList>
    </citation>
    <scope>X-RAY CRYSTALLOGRAPHY (2.80 ANGSTROMS) OF 579-680 AND 710-920</scope>
    <scope>SUBUNIT</scope>
    <scope>DOMAIN</scope>
    <scope>FUNCTION</scope>
    <scope>MUTAGENESIS OF GLY-718</scope>
</reference>
<evidence type="ECO:0000255" key="1">
    <source>
        <dbReference type="PROSITE-ProRule" id="PRU00145"/>
    </source>
</evidence>
<evidence type="ECO:0000256" key="2">
    <source>
        <dbReference type="SAM" id="MobiDB-lite"/>
    </source>
</evidence>
<evidence type="ECO:0000269" key="3">
    <source>
    </source>
</evidence>
<evidence type="ECO:0000269" key="4">
    <source>
    </source>
</evidence>
<evidence type="ECO:0000269" key="5">
    <source>
    </source>
</evidence>
<evidence type="ECO:0000269" key="6">
    <source>
    </source>
</evidence>
<evidence type="ECO:0000269" key="7">
    <source>
    </source>
</evidence>
<evidence type="ECO:0000269" key="8">
    <source>
    </source>
</evidence>
<evidence type="ECO:0000269" key="9">
    <source>
    </source>
</evidence>
<evidence type="ECO:0000269" key="10">
    <source>
    </source>
</evidence>
<evidence type="ECO:0000269" key="11">
    <source>
    </source>
</evidence>
<evidence type="ECO:0000269" key="12">
    <source>
    </source>
</evidence>
<evidence type="ECO:0000269" key="13">
    <source>
    </source>
</evidence>
<evidence type="ECO:0000269" key="14">
    <source>
    </source>
</evidence>
<evidence type="ECO:0000269" key="15">
    <source>
    </source>
</evidence>
<evidence type="ECO:0000269" key="16">
    <source>
    </source>
</evidence>
<evidence type="ECO:0000269" key="17">
    <source>
    </source>
</evidence>
<evidence type="ECO:0000269" key="18">
    <source>
    </source>
</evidence>
<evidence type="ECO:0000269" key="19">
    <source>
    </source>
</evidence>
<evidence type="ECO:0000269" key="20">
    <source>
    </source>
</evidence>
<evidence type="ECO:0000269" key="21">
    <source>
    </source>
</evidence>
<evidence type="ECO:0000269" key="22">
    <source>
    </source>
</evidence>
<evidence type="ECO:0000269" key="23">
    <source>
    </source>
</evidence>
<evidence type="ECO:0000269" key="24">
    <source>
    </source>
</evidence>
<evidence type="ECO:0000269" key="25">
    <source>
    </source>
</evidence>
<evidence type="ECO:0000269" key="26">
    <source>
    </source>
</evidence>
<evidence type="ECO:0000269" key="27">
    <source>
    </source>
</evidence>
<evidence type="ECO:0000269" key="28">
    <source>
    </source>
</evidence>
<evidence type="ECO:0000269" key="29">
    <source>
    </source>
</evidence>
<evidence type="ECO:0000269" key="30">
    <source>
    </source>
</evidence>
<evidence type="ECO:0000269" key="31">
    <source>
    </source>
</evidence>
<evidence type="ECO:0000303" key="32">
    <source>
    </source>
</evidence>
<evidence type="ECO:0000305" key="33">
    <source>
    </source>
</evidence>
<evidence type="ECO:0007744" key="34">
    <source>
        <dbReference type="PDB" id="4XOH"/>
    </source>
</evidence>
<evidence type="ECO:0007829" key="35">
    <source>
        <dbReference type="PDB" id="4XOH"/>
    </source>
</evidence>
<name>BUD4_SCHPO</name>
<dbReference type="EMBL" id="Y07599">
    <property type="protein sequence ID" value="CAA68873.1"/>
    <property type="molecule type" value="mRNA"/>
</dbReference>
<dbReference type="EMBL" id="CU329672">
    <property type="protein sequence ID" value="CAB60689.1"/>
    <property type="molecule type" value="Genomic_DNA"/>
</dbReference>
<dbReference type="PIR" id="T43263">
    <property type="entry name" value="T43263"/>
</dbReference>
<dbReference type="RefSeq" id="NP_588075.1">
    <property type="nucleotide sequence ID" value="NM_001023067.2"/>
</dbReference>
<dbReference type="PDB" id="4XOH">
    <property type="method" value="X-ray"/>
    <property type="resolution" value="2.80 A"/>
    <property type="chains" value="A/B/C=579-680, A/B/C=710-920"/>
</dbReference>
<dbReference type="PDBsum" id="4XOH"/>
<dbReference type="SMR" id="P78953"/>
<dbReference type="BioGRID" id="275775">
    <property type="interactions" value="212"/>
</dbReference>
<dbReference type="DIP" id="DIP-36604N"/>
<dbReference type="FunCoup" id="P78953">
    <property type="interactions" value="4"/>
</dbReference>
<dbReference type="IntAct" id="P78953">
    <property type="interactions" value="3"/>
</dbReference>
<dbReference type="STRING" id="284812.P78953"/>
<dbReference type="iPTMnet" id="P78953"/>
<dbReference type="PaxDb" id="4896-SPCC4B3.15.1"/>
<dbReference type="EnsemblFungi" id="SPCC4B3.15.1">
    <property type="protein sequence ID" value="SPCC4B3.15.1:pep"/>
    <property type="gene ID" value="SPCC4B3.15"/>
</dbReference>
<dbReference type="GeneID" id="2539205"/>
<dbReference type="KEGG" id="spo:2539205"/>
<dbReference type="PomBase" id="SPCC4B3.15">
    <property type="gene designation" value="mid1"/>
</dbReference>
<dbReference type="VEuPathDB" id="FungiDB:SPCC4B3.15"/>
<dbReference type="HOGENOM" id="CLU_326017_0_0_1"/>
<dbReference type="InParanoid" id="P78953"/>
<dbReference type="OMA" id="YGHNDAL"/>
<dbReference type="Reactome" id="R-SPO-8980692">
    <property type="pathway name" value="RHOA GTPase cycle"/>
</dbReference>
<dbReference type="Reactome" id="R-SPO-9013026">
    <property type="pathway name" value="RHOB GTPase cycle"/>
</dbReference>
<dbReference type="Reactome" id="R-SPO-9013106">
    <property type="pathway name" value="RHOC GTPase cycle"/>
</dbReference>
<dbReference type="CD-CODE" id="3C2A39A9">
    <property type="entry name" value="Synthetic Condensate 000261"/>
</dbReference>
<dbReference type="CD-CODE" id="5B76C479">
    <property type="entry name" value="Contractile ring condensate"/>
</dbReference>
<dbReference type="PRO" id="PR:P78953"/>
<dbReference type="Proteomes" id="UP000002485">
    <property type="component" value="Chromosome III"/>
</dbReference>
<dbReference type="GO" id="GO:0005826">
    <property type="term" value="C:actomyosin contractile ring"/>
    <property type="evidence" value="ECO:0000318"/>
    <property type="project" value="GO_Central"/>
</dbReference>
<dbReference type="GO" id="GO:0031097">
    <property type="term" value="C:medial cortex"/>
    <property type="evidence" value="ECO:0000314"/>
    <property type="project" value="PomBase"/>
</dbReference>
<dbReference type="GO" id="GO:0071341">
    <property type="term" value="C:medial cortical node"/>
    <property type="evidence" value="ECO:0000314"/>
    <property type="project" value="PomBase"/>
</dbReference>
<dbReference type="GO" id="GO:0110085">
    <property type="term" value="C:mitotic actomyosin contractile ring"/>
    <property type="evidence" value="ECO:0000314"/>
    <property type="project" value="PomBase"/>
</dbReference>
<dbReference type="GO" id="GO:0120104">
    <property type="term" value="C:mitotic actomyosin contractile ring, proximal layer"/>
    <property type="evidence" value="ECO:0000314"/>
    <property type="project" value="PomBase"/>
</dbReference>
<dbReference type="GO" id="GO:0005635">
    <property type="term" value="C:nuclear envelope"/>
    <property type="evidence" value="ECO:0007005"/>
    <property type="project" value="PomBase"/>
</dbReference>
<dbReference type="GO" id="GO:0005634">
    <property type="term" value="C:nucleus"/>
    <property type="evidence" value="ECO:0000314"/>
    <property type="project" value="PomBase"/>
</dbReference>
<dbReference type="GO" id="GO:0106006">
    <property type="term" value="F:cytoskeletal protein-membrane anchor activity"/>
    <property type="evidence" value="ECO:0000353"/>
    <property type="project" value="PomBase"/>
</dbReference>
<dbReference type="GO" id="GO:0008289">
    <property type="term" value="F:lipid binding"/>
    <property type="evidence" value="ECO:0000269"/>
    <property type="project" value="PomBase"/>
</dbReference>
<dbReference type="GO" id="GO:0140693">
    <property type="term" value="F:molecular condensate scaffold activity"/>
    <property type="evidence" value="ECO:0000314"/>
    <property type="project" value="DisProt"/>
</dbReference>
<dbReference type="GO" id="GO:0005546">
    <property type="term" value="F:phosphatidylinositol-4,5-bisphosphate binding"/>
    <property type="evidence" value="ECO:0000314"/>
    <property type="project" value="PomBase"/>
</dbReference>
<dbReference type="GO" id="GO:0090488">
    <property type="term" value="F:polo box domain specific binding"/>
    <property type="evidence" value="ECO:0000353"/>
    <property type="project" value="PomBase"/>
</dbReference>
<dbReference type="GO" id="GO:0043495">
    <property type="term" value="F:protein-membrane adaptor activity"/>
    <property type="evidence" value="ECO:0000315"/>
    <property type="project" value="PomBase"/>
</dbReference>
<dbReference type="GO" id="GO:0000915">
    <property type="term" value="P:actomyosin contractile ring assembly"/>
    <property type="evidence" value="ECO:0000318"/>
    <property type="project" value="GO_Central"/>
</dbReference>
<dbReference type="GO" id="GO:1903475">
    <property type="term" value="P:mitotic actomyosin contractile ring assembly"/>
    <property type="evidence" value="ECO:0000315"/>
    <property type="project" value="PomBase"/>
</dbReference>
<dbReference type="GO" id="GO:0000281">
    <property type="term" value="P:mitotic cytokinesis"/>
    <property type="evidence" value="ECO:0000318"/>
    <property type="project" value="GO_Central"/>
</dbReference>
<dbReference type="GO" id="GO:1902408">
    <property type="term" value="P:mitotic cytokinesis, division site positioning"/>
    <property type="evidence" value="ECO:0000315"/>
    <property type="project" value="PomBase"/>
</dbReference>
<dbReference type="GO" id="GO:0031106">
    <property type="term" value="P:septin ring organization"/>
    <property type="evidence" value="ECO:0000315"/>
    <property type="project" value="PomBase"/>
</dbReference>
<dbReference type="CDD" id="cd00821">
    <property type="entry name" value="PH"/>
    <property type="match status" value="1"/>
</dbReference>
<dbReference type="DisProt" id="DP02903"/>
<dbReference type="Gene3D" id="2.30.29.30">
    <property type="entry name" value="Pleckstrin-homology domain (PH domain)/Phosphotyrosine-binding domain (PTB)"/>
    <property type="match status" value="1"/>
</dbReference>
<dbReference type="InterPro" id="IPR011993">
    <property type="entry name" value="PH-like_dom_sf"/>
</dbReference>
<dbReference type="InterPro" id="IPR001849">
    <property type="entry name" value="PH_domain"/>
</dbReference>
<dbReference type="SMART" id="SM00233">
    <property type="entry name" value="PH"/>
    <property type="match status" value="1"/>
</dbReference>
<dbReference type="SUPFAM" id="SSF50729">
    <property type="entry name" value="PH domain-like"/>
    <property type="match status" value="1"/>
</dbReference>
<dbReference type="PROSITE" id="PS50003">
    <property type="entry name" value="PH_DOMAIN"/>
    <property type="match status" value="1"/>
</dbReference>
<sequence length="920" mass="102367">MKEQEFSYREAKDVSLDSKGLENSFLSSPNREKTPLFFEGNSNETSGYDQTKNFTHGDGDMSLGNLSELNVATDLLESLDLRSMYMHGYGHLDSSFSSQHSPDNRKRMSSTSVFKRINSEEEGRIPSLTYSAGTMNSTSSSTASLKGADIVADYETFNPDQNLAELSFDRSKSSRKRAVEVAEFSRAKTMSPLEYTVQHPYQSHNELSTNPARARAGSVPNLARIPSDVKPVPPAHLSASSTVGPRILPSLPKDTTEDNPALERVETTASLDMDYKPLEPLAPIQEAPVEDTSEPFSSVPEATLDDSDISTESLRKKVLAKMEAKRISSGSSYASTLRKVYDFSELSLPTNGKDYDELYLQSSRNSEPEISTIINDSLQQENMDEDISATSIPKSQAAYGHGSVTYHEVPRYNLTSASVGYSISSQRGRIKSSSTIDNLSAILSSEDLRHPSMQPVPGTKRTYSNYCENEPNKSSQSLVSSESHNVEGWNYSETGTVGFYDPSAEISASIDELRQSTPVARDSELLSRAHSFDLNRLDLPSQDKSTSYEVPNGTENQSPRPVTSLGFVNETFFEEKPKAPLPLGRFYIHLNSILNISISEVHSPIKIIVNTPTQNMQLPWQAVNGNNRLDHDFAFHVDDNFKVSFMFLDIPIEDKSNGSKGVSATKDVSNGKPAETKSKARKFFDKLFNRRKKRKLNKAAAVENSKAKKSVVIKKVSGTATLNLGNVKDSCFGKAFNVEIPIISRGFLEAIPVKINSIGKRTLGNLTLTCLYIPELSVPEQELPFTLEQATMDLRHVRSNYLYNEGYLYRLEDSSIRRRFVVLRSKQLNFYAEKGGQYLDTFQLSKTVVSIPMVNFSEAVSNLGLVAGILATSVDRRHVQLFADSKKVCQKWLQVMNSRSFALDRGTEKLWLQEYVNFMA</sequence>
<gene>
    <name evidence="32" type="primary">mid1</name>
    <name evidence="32" type="synonym">dmf1</name>
    <name type="ORF">SPCC4B3.15</name>
</gene>
<feature type="chain" id="PRO_0000079937" description="Anillin-related medial ring protein mid1">
    <location>
        <begin position="1"/>
        <end position="920"/>
    </location>
</feature>
<feature type="domain" description="PH" evidence="1">
    <location>
        <begin position="802"/>
        <end position="901"/>
    </location>
</feature>
<feature type="region of interest" description="Disordered" evidence="29">
    <location>
        <begin position="1"/>
        <end position="452"/>
    </location>
</feature>
<feature type="region of interest" description="Disordered" evidence="2">
    <location>
        <begin position="538"/>
        <end position="561"/>
    </location>
</feature>
<feature type="region of interest" description="Cryptic lipid-binding C2 domain" evidence="27">
    <location>
        <begin position="551"/>
        <end position="920"/>
    </location>
</feature>
<feature type="short sequence motif" description="Nuclear export sequence (NES) 1" evidence="3">
    <location>
        <begin position="69"/>
        <end position="81"/>
    </location>
</feature>
<feature type="short sequence motif" description="Nuclear localization sequence (NLS)" evidence="3">
    <location>
        <begin position="681"/>
        <end position="710"/>
    </location>
</feature>
<feature type="short sequence motif" description="Nuclear export sequence (NES) 2" evidence="3">
    <location>
        <begin position="763"/>
        <end position="773"/>
    </location>
</feature>
<feature type="compositionally biased region" description="Polar residues" evidence="2">
    <location>
        <begin position="461"/>
        <end position="481"/>
    </location>
</feature>
<feature type="compositionally biased region" description="Polar residues" evidence="2">
    <location>
        <begin position="542"/>
        <end position="561"/>
    </location>
</feature>
<feature type="modified residue" description="Phosphoserine" evidence="18">
    <location>
        <position position="15"/>
    </location>
</feature>
<feature type="modified residue" description="Phosphoserine" evidence="18">
    <location>
        <position position="24"/>
    </location>
</feature>
<feature type="modified residue" description="Phosphothreonine" evidence="18">
    <location>
        <position position="34"/>
    </location>
</feature>
<feature type="modified residue" description="Phosphoserine" evidence="18">
    <location>
        <position position="46"/>
    </location>
</feature>
<feature type="modified residue" description="Phosphoserine" evidence="18">
    <location>
        <position position="62"/>
    </location>
</feature>
<feature type="modified residue" description="Phosphoserine" evidence="18">
    <location>
        <position position="95"/>
    </location>
</feature>
<feature type="modified residue" description="Phosphoserine" evidence="11">
    <location>
        <position position="531"/>
    </location>
</feature>
<feature type="mutagenesis site" description="Disrupts the structural integrity of the C2 membrane-binding domain and impairs the function." evidence="27">
    <original>G</original>
    <variation>D</variation>
    <location>
        <position position="718"/>
    </location>
</feature>
<feature type="strand" evidence="35">
    <location>
        <begin position="583"/>
        <end position="595"/>
    </location>
</feature>
<feature type="strand" evidence="35">
    <location>
        <begin position="605"/>
        <end position="611"/>
    </location>
</feature>
<feature type="strand" evidence="35">
    <location>
        <begin position="614"/>
        <end position="620"/>
    </location>
</feature>
<feature type="strand" evidence="35">
    <location>
        <begin position="628"/>
        <end position="638"/>
    </location>
</feature>
<feature type="strand" evidence="35">
    <location>
        <begin position="642"/>
        <end position="652"/>
    </location>
</feature>
<feature type="strand" evidence="35">
    <location>
        <begin position="714"/>
        <end position="723"/>
    </location>
</feature>
<feature type="helix" evidence="35">
    <location>
        <begin position="724"/>
        <end position="726"/>
    </location>
</feature>
<feature type="helix" evidence="35">
    <location>
        <begin position="728"/>
        <end position="731"/>
    </location>
</feature>
<feature type="strand" evidence="35">
    <location>
        <begin position="736"/>
        <end position="744"/>
    </location>
</feature>
<feature type="strand" evidence="35">
    <location>
        <begin position="762"/>
        <end position="774"/>
    </location>
</feature>
<feature type="helix" evidence="35">
    <location>
        <begin position="780"/>
        <end position="782"/>
    </location>
</feature>
<feature type="helix" evidence="35">
    <location>
        <begin position="787"/>
        <end position="794"/>
    </location>
</feature>
<feature type="strand" evidence="35">
    <location>
        <begin position="797"/>
        <end position="799"/>
    </location>
</feature>
<feature type="strand" evidence="35">
    <location>
        <begin position="803"/>
        <end position="810"/>
    </location>
</feature>
<feature type="strand" evidence="35">
    <location>
        <begin position="818"/>
        <end position="824"/>
    </location>
</feature>
<feature type="strand" evidence="35">
    <location>
        <begin position="827"/>
        <end position="832"/>
    </location>
</feature>
<feature type="turn" evidence="35">
    <location>
        <begin position="833"/>
        <end position="836"/>
    </location>
</feature>
<feature type="strand" evidence="35">
    <location>
        <begin position="837"/>
        <end position="844"/>
    </location>
</feature>
<feature type="strand" evidence="35">
    <location>
        <begin position="846"/>
        <end position="848"/>
    </location>
</feature>
<feature type="helix" evidence="35">
    <location>
        <begin position="860"/>
        <end position="863"/>
    </location>
</feature>
<feature type="strand" evidence="35">
    <location>
        <begin position="867"/>
        <end position="873"/>
    </location>
</feature>
<feature type="strand" evidence="35">
    <location>
        <begin position="878"/>
        <end position="884"/>
    </location>
</feature>
<feature type="helix" evidence="35">
    <location>
        <begin position="886"/>
        <end position="896"/>
    </location>
</feature>
<feature type="strand" evidence="35">
    <location>
        <begin position="901"/>
        <end position="903"/>
    </location>
</feature>
<feature type="helix" evidence="35">
    <location>
        <begin position="910"/>
        <end position="918"/>
    </location>
</feature>
<protein>
    <recommendedName>
        <fullName evidence="32">Anillin-related medial ring protein mid1</fullName>
    </recommendedName>
</protein>
<comment type="function">
    <text evidence="3 4 5 6 7 8 9 10 12 13 14 17 18 19 20 21 22 23 24 25 27 28 30 31">Scaffold protein that anchors the contractile ring (CR) at the cell equator during cytokinesis (PubMed:10930468, PubMed:12186944, PubMed:16864655, PubMed:17077120, PubMed:17140794, PubMed:19427212, PubMed:19474789, PubMed:22298427, PubMed:22427686, PubMed:22888038, PubMed:22918954, PubMed:23149940, PubMed:25959226, PubMed:28605916, PubMed:8946912, PubMed:9852154). At the onset of mitosis, membrane-bound oligomers of mid1 assemble recruitment platforms for cytokinetic ring components at the medial cortex and stabilize the ring position during its compaction (PubMed:10930468, PubMed:12186944, PubMed:15572668, PubMed:16864655, PubMed:17077120, PubMed:17140794, PubMed:19474789, PubMed:25959226, PubMed:28605916, PubMed:8946912, PubMed:9852154). Recruits dephosphorylated myo2, but also rng2, clp1 and cdc15 to nodes and to place cytokinetic nodes around the cell equator the medial cortex to promote the ring assembly in cooperation with F-actin (PubMed:15184401, PubMed:18378776, PubMed:21376595, PubMed:21376600, PubMed:22918943). Necessary to stabilize the mitotic spindle perpendicular to the axis of cell division (PubMed:15014440). Also recruits the cdr2 kinase to the CR (PubMed:19474789, PubMed:24982431, PubMed:28605916).</text>
</comment>
<comment type="function">
    <text evidence="16">In the nucleus, binds to the promoter regions of M-G1 transcribed genes to negatively regulate their expression.</text>
</comment>
<comment type="subunit">
    <text evidence="7 12 14 16 18 19 24 25 27">Homodimer (PubMed:15572668, PubMed:25959226). Interacts with blt1 and cdr2 (PubMed:19474789, PubMed:23149940, PubMed:24982431). Interacts with gef2 (PubMed:22298427). Interacts with plo1 and rng2 (PubMed:21376600). Interacts with fhk2 and sep1 (PubMed:21098635). Interacts with clp1 (PubMed:18378776).</text>
</comment>
<comment type="subcellular location">
    <subcellularLocation>
        <location evidence="3 4 13 14 31">Nucleus</location>
    </subcellularLocation>
    <subcellularLocation>
        <location evidence="3 4 8 9 10 13 14 15 19 20 23 26 31">Cytoplasm</location>
        <location evidence="3 4 8 9 10 13 14 15 19 20 23 26 31">Cell cortex</location>
    </subcellularLocation>
    <subcellularLocation>
        <location evidence="14">Cytoplasm</location>
        <location evidence="14">Cytoskeleton</location>
    </subcellularLocation>
    <text evidence="4 8 9 10 13 14 15 19 28 31">During interphase, is exported from the nucleus and relocates to medial ring at the cell cortex (PubMed:12186944, PubMed:16864655, PubMed:19427212, PubMed:19474789). The localization to the cell division plane is regulated by the cell-end factor pom1 (PubMed:17077120, PubMed:17140794). First forms a diffuse cortical band during spindle formation and then coalesces into a ring before anaphase (PubMed:9852154). Binding to the medial cortex is facilitated by gef2 (PubMed:22298427). Phosphorylation by sid2 leads to removal from the cortex (PubMed:28605916). The cortical ER network restricts the lateral motion of mid1 and hence generates a permissive zone for actomyosin ring assembly precisely at the cell equator (PubMed:20434336).</text>
</comment>
<comment type="domain">
    <text evidence="7 20 23 29">The N-terminal part (residues 1 to 452) is intrinsically disordered but moderately compact and is able to demixe into liquid droplets at concentrations far below its concentration in cytokinesis organizing centers (also called nodes); these physical properties are appropriate for scaffolding other proteins in nodes (PubMed:31243991). The N-terminus has the ability to associate faintly with the medial cortex and is sufficient to form tight rings (PubMed:15572668, PubMed:22427686). This domain is responsible for oligomerization that may contribute to the activity of mid1 as a scaffold for other proteins in cytokinetic nodes and contractile rings (PubMed:22918954).</text>
</comment>
<comment type="domain">
    <text evidence="7 20 23 27">The C-terminus contains a cryptic lipid-binding C2 domain and a PH domain, and is involved in the anchorage to membranes, which stabilizes cytokinetic ring position.</text>
</comment>
<comment type="domain">
    <text evidence="3">The nuclear localization sequence (NLS) is required for nuclear import, whereas both leucine-rich nuclear export sequences NES1 and NES2 are required for nuclear export.</text>
</comment>
<comment type="PTM">
    <text evidence="11 18 28 30 33">Phosphorylated (PubMed:18257517, PubMed:8946912). At the onset of mitosis, becomes hyperphosphorylated, leaves the nucleus, and forms a medial ring (PubMed:8946912). Phosphorylation by plo1 and other kinases may contribute to solubilizing mid1 for export from the nucleus (Probable) (PubMed:21376600). Phosphorylation by sid2 drives removal from the cortex at the actomyosin contractile ring constriction onset (PubMed:28605916).</text>
</comment>
<keyword id="KW-0002">3D-structure</keyword>
<keyword id="KW-0131">Cell cycle</keyword>
<keyword id="KW-0132">Cell division</keyword>
<keyword id="KW-0963">Cytoplasm</keyword>
<keyword id="KW-0206">Cytoskeleton</keyword>
<keyword id="KW-0498">Mitosis</keyword>
<keyword id="KW-0539">Nucleus</keyword>
<keyword id="KW-0597">Phosphoprotein</keyword>
<keyword id="KW-1185">Reference proteome</keyword>